<reference key="1">
    <citation type="journal article" date="2005" name="Nucleic Acids Res.">
        <title>Genome dynamics and diversity of Shigella species, the etiologic agents of bacillary dysentery.</title>
        <authorList>
            <person name="Yang F."/>
            <person name="Yang J."/>
            <person name="Zhang X."/>
            <person name="Chen L."/>
            <person name="Jiang Y."/>
            <person name="Yan Y."/>
            <person name="Tang X."/>
            <person name="Wang J."/>
            <person name="Xiong Z."/>
            <person name="Dong J."/>
            <person name="Xue Y."/>
            <person name="Zhu Y."/>
            <person name="Xu X."/>
            <person name="Sun L."/>
            <person name="Chen S."/>
            <person name="Nie H."/>
            <person name="Peng J."/>
            <person name="Xu J."/>
            <person name="Wang Y."/>
            <person name="Yuan Z."/>
            <person name="Wen Y."/>
            <person name="Yao Z."/>
            <person name="Shen Y."/>
            <person name="Qiang B."/>
            <person name="Hou Y."/>
            <person name="Yu J."/>
            <person name="Jin Q."/>
        </authorList>
    </citation>
    <scope>NUCLEOTIDE SEQUENCE [LARGE SCALE GENOMIC DNA]</scope>
    <source>
        <strain>Ss046</strain>
    </source>
</reference>
<organism>
    <name type="scientific">Shigella sonnei (strain Ss046)</name>
    <dbReference type="NCBI Taxonomy" id="300269"/>
    <lineage>
        <taxon>Bacteria</taxon>
        <taxon>Pseudomonadati</taxon>
        <taxon>Pseudomonadota</taxon>
        <taxon>Gammaproteobacteria</taxon>
        <taxon>Enterobacterales</taxon>
        <taxon>Enterobacteriaceae</taxon>
        <taxon>Shigella</taxon>
    </lineage>
</organism>
<evidence type="ECO:0000255" key="1">
    <source>
        <dbReference type="HAMAP-Rule" id="MF_00397"/>
    </source>
</evidence>
<keyword id="KW-0067">ATP-binding</keyword>
<keyword id="KW-0547">Nucleotide-binding</keyword>
<keyword id="KW-1185">Reference proteome</keyword>
<keyword id="KW-0808">Transferase</keyword>
<gene>
    <name evidence="1" type="primary">citG</name>
    <name type="ordered locus">SSON_0565</name>
</gene>
<sequence length="292" mass="31626">MSMPATSTKTTKLATSLIDEYALLGWRAMLTEVNLSPKPGLVDRINCGAHKDMALEDFHRSALAIQGWLPRFIEFGACSAEIAPEAVLHGLRPIGMACEGDMFRATAGVNTHKGSIFSLGLLCAAIGRLLQLNQPVTPTTVCSTAASFCRGLTDRELRTNNSQLTAGQRLYQQLGLTGARGEAEAGYPLVINHALPHYLTLLDQGLDPELALLDTLLLLMAINGDTNVASRGGEGGLRWLQREAQTLLQKGGIRTPADLDYLRQFDRECIERNLSPGGSADLLILTWFLAQI</sequence>
<feature type="chain" id="PRO_0000255416" description="Probable 2-(5''-triphosphoribosyl)-3'-dephosphocoenzyme-A synthase">
    <location>
        <begin position="1"/>
        <end position="292"/>
    </location>
</feature>
<name>CITG_SHISS</name>
<proteinExistence type="inferred from homology"/>
<protein>
    <recommendedName>
        <fullName evidence="1">Probable 2-(5''-triphosphoribosyl)-3'-dephosphocoenzyme-A synthase</fullName>
        <shortName evidence="1">2-(5''-triphosphoribosyl)-3'-dephospho-CoA synthase</shortName>
        <ecNumber evidence="1">2.4.2.52</ecNumber>
    </recommendedName>
</protein>
<accession>Q3Z4I0</accession>
<dbReference type="EC" id="2.4.2.52" evidence="1"/>
<dbReference type="EMBL" id="CP000038">
    <property type="protein sequence ID" value="AAZ87332.1"/>
    <property type="molecule type" value="Genomic_DNA"/>
</dbReference>
<dbReference type="RefSeq" id="WP_000062446.1">
    <property type="nucleotide sequence ID" value="NC_007384.1"/>
</dbReference>
<dbReference type="KEGG" id="ssn:SSON_0565"/>
<dbReference type="HOGENOM" id="CLU_056179_1_0_6"/>
<dbReference type="Proteomes" id="UP000002529">
    <property type="component" value="Chromosome"/>
</dbReference>
<dbReference type="GO" id="GO:0005524">
    <property type="term" value="F:ATP binding"/>
    <property type="evidence" value="ECO:0007669"/>
    <property type="project" value="UniProtKB-KW"/>
</dbReference>
<dbReference type="GO" id="GO:0046917">
    <property type="term" value="F:triphosphoribosyl-dephospho-CoA synthase activity"/>
    <property type="evidence" value="ECO:0007669"/>
    <property type="project" value="UniProtKB-UniRule"/>
</dbReference>
<dbReference type="GO" id="GO:0051191">
    <property type="term" value="P:prosthetic group biosynthetic process"/>
    <property type="evidence" value="ECO:0007669"/>
    <property type="project" value="TreeGrafter"/>
</dbReference>
<dbReference type="FunFam" id="1.10.4200.10:FF:000001">
    <property type="entry name" value="Triphosphoribosyl-dephospho-CoA synthase CitG"/>
    <property type="match status" value="1"/>
</dbReference>
<dbReference type="Gene3D" id="1.10.4200.10">
    <property type="entry name" value="Triphosphoribosyl-dephospho-CoA protein"/>
    <property type="match status" value="1"/>
</dbReference>
<dbReference type="HAMAP" id="MF_00397">
    <property type="entry name" value="CitG"/>
    <property type="match status" value="1"/>
</dbReference>
<dbReference type="InterPro" id="IPR002736">
    <property type="entry name" value="CitG"/>
</dbReference>
<dbReference type="InterPro" id="IPR017551">
    <property type="entry name" value="TriPribosyl-deP-CoA_syn_CitG"/>
</dbReference>
<dbReference type="NCBIfam" id="TIGR03125">
    <property type="entry name" value="citrate_citG"/>
    <property type="match status" value="1"/>
</dbReference>
<dbReference type="NCBIfam" id="NF007503">
    <property type="entry name" value="PRK10096.1"/>
    <property type="match status" value="1"/>
</dbReference>
<dbReference type="PANTHER" id="PTHR30201:SF2">
    <property type="entry name" value="2-(5''-TRIPHOSPHORIBOSYL)-3'-DEPHOSPHOCOENZYME-A SYNTHASE"/>
    <property type="match status" value="1"/>
</dbReference>
<dbReference type="PANTHER" id="PTHR30201">
    <property type="entry name" value="TRIPHOSPHORIBOSYL-DEPHOSPHO-COA SYNTHASE"/>
    <property type="match status" value="1"/>
</dbReference>
<dbReference type="Pfam" id="PF01874">
    <property type="entry name" value="CitG"/>
    <property type="match status" value="1"/>
</dbReference>
<comment type="catalytic activity">
    <reaction evidence="1">
        <text>3'-dephospho-CoA + ATP = 2'-(5''-triphospho-alpha-D-ribosyl)-3'-dephospho-CoA + adenine</text>
        <dbReference type="Rhea" id="RHEA:15117"/>
        <dbReference type="ChEBI" id="CHEBI:16708"/>
        <dbReference type="ChEBI" id="CHEBI:30616"/>
        <dbReference type="ChEBI" id="CHEBI:57328"/>
        <dbReference type="ChEBI" id="CHEBI:61378"/>
        <dbReference type="EC" id="2.4.2.52"/>
    </reaction>
</comment>
<comment type="similarity">
    <text evidence="1">Belongs to the CitG/MdcB family.</text>
</comment>